<evidence type="ECO:0000250" key="1"/>
<evidence type="ECO:0000250" key="2">
    <source>
        <dbReference type="UniProtKB" id="P59940"/>
    </source>
</evidence>
<evidence type="ECO:0000250" key="3">
    <source>
        <dbReference type="UniProtKB" id="Q86QT3"/>
    </source>
</evidence>
<evidence type="ECO:0000250" key="4">
    <source>
        <dbReference type="UniProtKB" id="Q86QU9"/>
    </source>
</evidence>
<evidence type="ECO:0000303" key="5">
    <source>
    </source>
</evidence>
<evidence type="ECO:0000305" key="6"/>
<protein>
    <recommendedName>
        <fullName evidence="5">Potassium channel toxin gamma-KTx 4.5</fullName>
    </recommendedName>
    <alternativeName>
        <fullName evidence="6">CexErgTx4</fullName>
        <shortName evidence="5">CexErg4</shortName>
        <shortName evidence="5">ErgTx4</shortName>
    </alternativeName>
    <alternativeName>
        <fullName evidence="5">Ergtoxin-like protein</fullName>
    </alternativeName>
</protein>
<sequence length="43" mass="4948">DRDSCVDKSQCAKYGYYYQCDECCKKAGDRAGTCEYFKCKCNP</sequence>
<proteinExistence type="inferred from homology"/>
<organism>
    <name type="scientific">Centruroides exilicauda</name>
    <name type="common">Bark scorpion</name>
    <name type="synonym">Buthus exilicauda</name>
    <dbReference type="NCBI Taxonomy" id="6879"/>
    <lineage>
        <taxon>Eukaryota</taxon>
        <taxon>Metazoa</taxon>
        <taxon>Ecdysozoa</taxon>
        <taxon>Arthropoda</taxon>
        <taxon>Chelicerata</taxon>
        <taxon>Arachnida</taxon>
        <taxon>Scorpiones</taxon>
        <taxon>Buthida</taxon>
        <taxon>Buthoidea</taxon>
        <taxon>Buthidae</taxon>
        <taxon>Centruroides</taxon>
    </lineage>
</organism>
<feature type="chain" id="PRO_0000066863" description="Potassium channel toxin gamma-KTx 4.5">
    <location>
        <begin position="1"/>
        <end position="43"/>
    </location>
</feature>
<feature type="disulfide bond" evidence="3">
    <location>
        <begin position="5"/>
        <end position="23"/>
    </location>
</feature>
<feature type="disulfide bond" evidence="3">
    <location>
        <begin position="11"/>
        <end position="34"/>
    </location>
</feature>
<feature type="disulfide bond" evidence="3">
    <location>
        <begin position="20"/>
        <end position="39"/>
    </location>
</feature>
<feature type="disulfide bond" evidence="3">
    <location>
        <begin position="24"/>
        <end position="41"/>
    </location>
</feature>
<dbReference type="EMBL" id="AY159355">
    <property type="protein sequence ID" value="AAO22233.1"/>
    <property type="molecule type" value="mRNA"/>
</dbReference>
<dbReference type="SMR" id="Q86QT8"/>
<dbReference type="GO" id="GO:0005576">
    <property type="term" value="C:extracellular region"/>
    <property type="evidence" value="ECO:0007669"/>
    <property type="project" value="UniProtKB-SubCell"/>
</dbReference>
<dbReference type="GO" id="GO:0019870">
    <property type="term" value="F:potassium channel inhibitor activity"/>
    <property type="evidence" value="ECO:0007669"/>
    <property type="project" value="InterPro"/>
</dbReference>
<dbReference type="GO" id="GO:0090729">
    <property type="term" value="F:toxin activity"/>
    <property type="evidence" value="ECO:0007669"/>
    <property type="project" value="UniProtKB-KW"/>
</dbReference>
<dbReference type="Gene3D" id="3.30.30.10">
    <property type="entry name" value="Knottin, scorpion toxin-like"/>
    <property type="match status" value="1"/>
</dbReference>
<dbReference type="InterPro" id="IPR012622">
    <property type="entry name" value="Ergtoxin"/>
</dbReference>
<dbReference type="InterPro" id="IPR036574">
    <property type="entry name" value="Scorpion_toxin-like_sf"/>
</dbReference>
<dbReference type="Pfam" id="PF08086">
    <property type="entry name" value="Toxin_17"/>
    <property type="match status" value="1"/>
</dbReference>
<dbReference type="SUPFAM" id="SSF57095">
    <property type="entry name" value="Scorpion toxin-like"/>
    <property type="match status" value="1"/>
</dbReference>
<dbReference type="PROSITE" id="PS60026">
    <property type="entry name" value="ERGTX"/>
    <property type="match status" value="1"/>
</dbReference>
<keyword id="KW-1015">Disulfide bond</keyword>
<keyword id="KW-0872">Ion channel impairing toxin</keyword>
<keyword id="KW-0960">Knottin</keyword>
<keyword id="KW-0528">Neurotoxin</keyword>
<keyword id="KW-0632">Potassium channel impairing toxin</keyword>
<keyword id="KW-0964">Secreted</keyword>
<keyword id="KW-0800">Toxin</keyword>
<keyword id="KW-1220">Voltage-gated potassium channel impairing toxin</keyword>
<comment type="function">
    <text evidence="2">Reversibly blocks Kv11/ERG potassium channels.</text>
</comment>
<comment type="subcellular location">
    <subcellularLocation>
        <location evidence="4">Secreted</location>
    </subcellularLocation>
</comment>
<comment type="tissue specificity">
    <text evidence="6">Expressed by the venom gland.</text>
</comment>
<comment type="domain">
    <text evidence="1">The presence of a 'disulfide through disulfide knot' structurally defines this protein as a knottin.</text>
</comment>
<comment type="domain">
    <text evidence="3">Has the CSalpha/beta fold, which comprises one or two short alpha helices connected to anti-parallel beta-sheets stabilized by three or four disulfide bonds.</text>
</comment>
<comment type="similarity">
    <text evidence="6">Belongs to the ergtoxin family. Gamma-KTx 4 subfamily.</text>
</comment>
<reference key="1">
    <citation type="journal article" date="2002" name="FEBS Lett.">
        <title>A large number of novel Ergtoxin-like genes and ERG K+-channels blocking peptides from scorpions of the genus Centruroides.</title>
        <authorList>
            <person name="Corona M."/>
            <person name="Gurrola G.B."/>
            <person name="Merino E."/>
            <person name="Cassulini R.R."/>
            <person name="Valdez-Cruz N.A."/>
            <person name="Garcia B."/>
            <person name="Ramirez-Dominguez M.E."/>
            <person name="Coronas F.I."/>
            <person name="Zamudio F.Z."/>
            <person name="Wanke E."/>
            <person name="Possani L.D."/>
        </authorList>
    </citation>
    <scope>NUCLEOTIDE SEQUENCE [MRNA]</scope>
    <scope>NOMENCLATURE</scope>
    <source>
        <tissue>Venom gland</tissue>
    </source>
</reference>
<accession>Q86QT8</accession>
<name>KGX45_CENEX</name>